<protein>
    <recommendedName>
        <fullName evidence="1">Nucleoid-associated protein Hhal_0231</fullName>
    </recommendedName>
</protein>
<feature type="chain" id="PRO_1000003751" description="Nucleoid-associated protein Hhal_0231">
    <location>
        <begin position="1"/>
        <end position="107"/>
    </location>
</feature>
<feature type="region of interest" description="Disordered" evidence="2">
    <location>
        <begin position="1"/>
        <end position="24"/>
    </location>
</feature>
<feature type="region of interest" description="Disordered" evidence="2">
    <location>
        <begin position="82"/>
        <end position="107"/>
    </location>
</feature>
<feature type="compositionally biased region" description="Basic and acidic residues" evidence="2">
    <location>
        <begin position="15"/>
        <end position="24"/>
    </location>
</feature>
<comment type="function">
    <text evidence="1">Binds to DNA and alters its conformation. May be involved in regulation of gene expression, nucleoid organization and DNA protection.</text>
</comment>
<comment type="subunit">
    <text evidence="1">Homodimer.</text>
</comment>
<comment type="subcellular location">
    <subcellularLocation>
        <location evidence="1">Cytoplasm</location>
        <location evidence="1">Nucleoid</location>
    </subcellularLocation>
</comment>
<comment type="similarity">
    <text evidence="1">Belongs to the YbaB/EbfC family.</text>
</comment>
<evidence type="ECO:0000255" key="1">
    <source>
        <dbReference type="HAMAP-Rule" id="MF_00274"/>
    </source>
</evidence>
<evidence type="ECO:0000256" key="2">
    <source>
        <dbReference type="SAM" id="MobiDB-lite"/>
    </source>
</evidence>
<reference key="1">
    <citation type="submission" date="2006-12" db="EMBL/GenBank/DDBJ databases">
        <title>Complete sequence of Halorhodospira halophila SL1.</title>
        <authorList>
            <consortium name="US DOE Joint Genome Institute"/>
            <person name="Copeland A."/>
            <person name="Lucas S."/>
            <person name="Lapidus A."/>
            <person name="Barry K."/>
            <person name="Detter J.C."/>
            <person name="Glavina del Rio T."/>
            <person name="Hammon N."/>
            <person name="Israni S."/>
            <person name="Dalin E."/>
            <person name="Tice H."/>
            <person name="Pitluck S."/>
            <person name="Saunders E."/>
            <person name="Brettin T."/>
            <person name="Bruce D."/>
            <person name="Han C."/>
            <person name="Tapia R."/>
            <person name="Schmutz J."/>
            <person name="Larimer F."/>
            <person name="Land M."/>
            <person name="Hauser L."/>
            <person name="Kyrpides N."/>
            <person name="Mikhailova N."/>
            <person name="Hoff W."/>
            <person name="Richardson P."/>
        </authorList>
    </citation>
    <scope>NUCLEOTIDE SEQUENCE [LARGE SCALE GENOMIC DNA]</scope>
    <source>
        <strain>DSM 244 / SL1</strain>
    </source>
</reference>
<gene>
    <name type="ordered locus">Hhal_0231</name>
</gene>
<dbReference type="EMBL" id="CP000544">
    <property type="protein sequence ID" value="ABM61025.1"/>
    <property type="molecule type" value="Genomic_DNA"/>
</dbReference>
<dbReference type="RefSeq" id="WP_011813048.1">
    <property type="nucleotide sequence ID" value="NC_008789.1"/>
</dbReference>
<dbReference type="SMR" id="A1WTL3"/>
<dbReference type="STRING" id="349124.Hhal_0231"/>
<dbReference type="KEGG" id="hha:Hhal_0231"/>
<dbReference type="eggNOG" id="COG0718">
    <property type="taxonomic scope" value="Bacteria"/>
</dbReference>
<dbReference type="HOGENOM" id="CLU_140930_0_0_6"/>
<dbReference type="OrthoDB" id="9808738at2"/>
<dbReference type="Proteomes" id="UP000000647">
    <property type="component" value="Chromosome"/>
</dbReference>
<dbReference type="GO" id="GO:0043590">
    <property type="term" value="C:bacterial nucleoid"/>
    <property type="evidence" value="ECO:0007669"/>
    <property type="project" value="UniProtKB-UniRule"/>
</dbReference>
<dbReference type="GO" id="GO:0005829">
    <property type="term" value="C:cytosol"/>
    <property type="evidence" value="ECO:0007669"/>
    <property type="project" value="TreeGrafter"/>
</dbReference>
<dbReference type="GO" id="GO:0003677">
    <property type="term" value="F:DNA binding"/>
    <property type="evidence" value="ECO:0007669"/>
    <property type="project" value="UniProtKB-UniRule"/>
</dbReference>
<dbReference type="FunFam" id="3.30.1310.10:FF:000001">
    <property type="entry name" value="Nucleoid-associated protein YbaB"/>
    <property type="match status" value="1"/>
</dbReference>
<dbReference type="Gene3D" id="3.30.1310.10">
    <property type="entry name" value="Nucleoid-associated protein YbaB-like domain"/>
    <property type="match status" value="1"/>
</dbReference>
<dbReference type="HAMAP" id="MF_00274">
    <property type="entry name" value="DNA_YbaB_EbfC"/>
    <property type="match status" value="1"/>
</dbReference>
<dbReference type="InterPro" id="IPR036894">
    <property type="entry name" value="YbaB-like_sf"/>
</dbReference>
<dbReference type="InterPro" id="IPR004401">
    <property type="entry name" value="YbaB/EbfC"/>
</dbReference>
<dbReference type="NCBIfam" id="TIGR00103">
    <property type="entry name" value="DNA_YbaB_EbfC"/>
    <property type="match status" value="1"/>
</dbReference>
<dbReference type="PANTHER" id="PTHR33449">
    <property type="entry name" value="NUCLEOID-ASSOCIATED PROTEIN YBAB"/>
    <property type="match status" value="1"/>
</dbReference>
<dbReference type="PANTHER" id="PTHR33449:SF1">
    <property type="entry name" value="NUCLEOID-ASSOCIATED PROTEIN YBAB"/>
    <property type="match status" value="1"/>
</dbReference>
<dbReference type="Pfam" id="PF02575">
    <property type="entry name" value="YbaB_DNA_bd"/>
    <property type="match status" value="1"/>
</dbReference>
<dbReference type="PIRSF" id="PIRSF004555">
    <property type="entry name" value="UCP004555"/>
    <property type="match status" value="1"/>
</dbReference>
<dbReference type="SUPFAM" id="SSF82607">
    <property type="entry name" value="YbaB-like"/>
    <property type="match status" value="1"/>
</dbReference>
<proteinExistence type="inferred from homology"/>
<sequence length="107" mass="11674">MKGGLGNIMKQAQKMQEDMQKAQEEIAAMEVSGEAGAGMVKVTMTGRNEVRKVEIDPSLFEDDREMVEDLVAAAVNDAVQKVQRESQERMSGMAEGMGLPPGMKLPF</sequence>
<accession>A1WTL3</accession>
<keyword id="KW-0963">Cytoplasm</keyword>
<keyword id="KW-0238">DNA-binding</keyword>
<keyword id="KW-1185">Reference proteome</keyword>
<organism>
    <name type="scientific">Halorhodospira halophila (strain DSM 244 / SL1)</name>
    <name type="common">Ectothiorhodospira halophila (strain DSM 244 / SL1)</name>
    <dbReference type="NCBI Taxonomy" id="349124"/>
    <lineage>
        <taxon>Bacteria</taxon>
        <taxon>Pseudomonadati</taxon>
        <taxon>Pseudomonadota</taxon>
        <taxon>Gammaproteobacteria</taxon>
        <taxon>Chromatiales</taxon>
        <taxon>Ectothiorhodospiraceae</taxon>
        <taxon>Halorhodospira</taxon>
    </lineage>
</organism>
<name>Y231_HALHL</name>